<comment type="function">
    <text evidence="1">F(1)F(0) ATP synthase produces ATP from ADP in the presence of a proton or sodium gradient. F-type ATPases consist of two structural domains, F(1) containing the extramembraneous catalytic core and F(0) containing the membrane proton channel, linked together by a central stalk and a peripheral stalk. During catalysis, ATP synthesis in the catalytic domain of F(1) is coupled via a rotary mechanism of the central stalk subunits to proton translocation.</text>
</comment>
<comment type="function">
    <text evidence="1">Key component of the F(0) channel; it plays a direct role in translocation across the membrane. A homomeric c-ring of between 10-14 subunits forms the central stalk rotor element with the F(1) delta and epsilon subunits.</text>
</comment>
<comment type="subunit">
    <text evidence="1">F-type ATPases have 2 components, F(1) - the catalytic core - and F(0) - the membrane proton channel. F(1) has five subunits: alpha(3), beta(3), gamma(1), delta(1), epsilon(1). F(0) has three main subunits: a(1), b(2) and c(10-14). The alpha and beta chains form an alternating ring which encloses part of the gamma chain. F(1) is attached to F(0) by a central stalk formed by the gamma and epsilon chains, while a peripheral stalk is formed by the delta and b chains.</text>
</comment>
<comment type="subcellular location">
    <subcellularLocation>
        <location evidence="1">Cell inner membrane</location>
        <topology evidence="1">Multi-pass membrane protein</topology>
    </subcellularLocation>
</comment>
<comment type="similarity">
    <text evidence="1">Belongs to the ATPase C chain family.</text>
</comment>
<evidence type="ECO:0000255" key="1">
    <source>
        <dbReference type="HAMAP-Rule" id="MF_01396"/>
    </source>
</evidence>
<accession>Q31DL5</accession>
<proteinExistence type="inferred from homology"/>
<feature type="chain" id="PRO_1000184522" description="ATP synthase subunit c">
    <location>
        <begin position="1"/>
        <end position="94"/>
    </location>
</feature>
<feature type="transmembrane region" description="Helical" evidence="1">
    <location>
        <begin position="15"/>
        <end position="35"/>
    </location>
</feature>
<feature type="transmembrane region" description="Helical" evidence="1">
    <location>
        <begin position="58"/>
        <end position="78"/>
    </location>
</feature>
<feature type="site" description="Reversibly protonated during proton transport" evidence="1">
    <location>
        <position position="65"/>
    </location>
</feature>
<organism>
    <name type="scientific">Hydrogenovibrio crunogenus (strain DSM 25203 / XCL-2)</name>
    <name type="common">Thiomicrospira crunogena</name>
    <dbReference type="NCBI Taxonomy" id="317025"/>
    <lineage>
        <taxon>Bacteria</taxon>
        <taxon>Pseudomonadati</taxon>
        <taxon>Pseudomonadota</taxon>
        <taxon>Gammaproteobacteria</taxon>
        <taxon>Thiotrichales</taxon>
        <taxon>Piscirickettsiaceae</taxon>
        <taxon>Hydrogenovibrio</taxon>
    </lineage>
</organism>
<gene>
    <name evidence="1" type="primary">atpE</name>
    <name type="ordered locus">Tcr_2170</name>
</gene>
<reference key="1">
    <citation type="journal article" date="2006" name="PLoS Biol.">
        <title>The genome of deep-sea vent chemolithoautotroph Thiomicrospira crunogena XCL-2.</title>
        <authorList>
            <person name="Scott K.M."/>
            <person name="Sievert S.M."/>
            <person name="Abril F.N."/>
            <person name="Ball L.A."/>
            <person name="Barrett C.J."/>
            <person name="Blake R.A."/>
            <person name="Boller A.J."/>
            <person name="Chain P.S.G."/>
            <person name="Clark J.A."/>
            <person name="Davis C.R."/>
            <person name="Detter C."/>
            <person name="Do K.F."/>
            <person name="Dobrinski K.P."/>
            <person name="Faza B.I."/>
            <person name="Fitzpatrick K.A."/>
            <person name="Freyermuth S.K."/>
            <person name="Harmer T.L."/>
            <person name="Hauser L.J."/>
            <person name="Huegler M."/>
            <person name="Kerfeld C.A."/>
            <person name="Klotz M.G."/>
            <person name="Kong W.W."/>
            <person name="Land M."/>
            <person name="Lapidus A."/>
            <person name="Larimer F.W."/>
            <person name="Longo D.L."/>
            <person name="Lucas S."/>
            <person name="Malfatti S.A."/>
            <person name="Massey S.E."/>
            <person name="Martin D.D."/>
            <person name="McCuddin Z."/>
            <person name="Meyer F."/>
            <person name="Moore J.L."/>
            <person name="Ocampo L.H. Jr."/>
            <person name="Paul J.H."/>
            <person name="Paulsen I.T."/>
            <person name="Reep D.K."/>
            <person name="Ren Q."/>
            <person name="Ross R.L."/>
            <person name="Sato P.Y."/>
            <person name="Thomas P."/>
            <person name="Tinkham L.E."/>
            <person name="Zeruth G.T."/>
        </authorList>
    </citation>
    <scope>NUCLEOTIDE SEQUENCE [LARGE SCALE GENOMIC DNA]</scope>
    <source>
        <strain>DSM 25203 / XCL-2</strain>
    </source>
</reference>
<keyword id="KW-0066">ATP synthesis</keyword>
<keyword id="KW-0997">Cell inner membrane</keyword>
<keyword id="KW-1003">Cell membrane</keyword>
<keyword id="KW-0138">CF(0)</keyword>
<keyword id="KW-0375">Hydrogen ion transport</keyword>
<keyword id="KW-0406">Ion transport</keyword>
<keyword id="KW-0446">Lipid-binding</keyword>
<keyword id="KW-0472">Membrane</keyword>
<keyword id="KW-0812">Transmembrane</keyword>
<keyword id="KW-1133">Transmembrane helix</keyword>
<keyword id="KW-0813">Transport</keyword>
<sequence length="94" mass="9906">MEAQFIADIYAATAIGVGVILAAAGLGSAIGWGLICSKTLEGIARQPEMRPALMTNMFIFAGLMESFPFIILAFAMWFLFANPFVGAMQAALGA</sequence>
<protein>
    <recommendedName>
        <fullName evidence="1">ATP synthase subunit c</fullName>
    </recommendedName>
    <alternativeName>
        <fullName evidence="1">ATP synthase F(0) sector subunit c</fullName>
    </alternativeName>
    <alternativeName>
        <fullName evidence="1">F-type ATPase subunit c</fullName>
        <shortName evidence="1">F-ATPase subunit c</shortName>
    </alternativeName>
    <alternativeName>
        <fullName evidence="1">Lipid-binding protein</fullName>
    </alternativeName>
</protein>
<dbReference type="EMBL" id="CP000109">
    <property type="protein sequence ID" value="ABB42758.1"/>
    <property type="molecule type" value="Genomic_DNA"/>
</dbReference>
<dbReference type="SMR" id="Q31DL5"/>
<dbReference type="STRING" id="317025.Tcr_2170"/>
<dbReference type="KEGG" id="tcx:Tcr_2170"/>
<dbReference type="eggNOG" id="COG0636">
    <property type="taxonomic scope" value="Bacteria"/>
</dbReference>
<dbReference type="HOGENOM" id="CLU_148047_1_0_6"/>
<dbReference type="OrthoDB" id="9811659at2"/>
<dbReference type="GO" id="GO:0005886">
    <property type="term" value="C:plasma membrane"/>
    <property type="evidence" value="ECO:0007669"/>
    <property type="project" value="UniProtKB-SubCell"/>
</dbReference>
<dbReference type="GO" id="GO:0045259">
    <property type="term" value="C:proton-transporting ATP synthase complex"/>
    <property type="evidence" value="ECO:0007669"/>
    <property type="project" value="UniProtKB-KW"/>
</dbReference>
<dbReference type="GO" id="GO:0033177">
    <property type="term" value="C:proton-transporting two-sector ATPase complex, proton-transporting domain"/>
    <property type="evidence" value="ECO:0007669"/>
    <property type="project" value="InterPro"/>
</dbReference>
<dbReference type="GO" id="GO:0008289">
    <property type="term" value="F:lipid binding"/>
    <property type="evidence" value="ECO:0007669"/>
    <property type="project" value="UniProtKB-KW"/>
</dbReference>
<dbReference type="GO" id="GO:0046933">
    <property type="term" value="F:proton-transporting ATP synthase activity, rotational mechanism"/>
    <property type="evidence" value="ECO:0007669"/>
    <property type="project" value="UniProtKB-UniRule"/>
</dbReference>
<dbReference type="CDD" id="cd18185">
    <property type="entry name" value="ATP-synt_Fo_c_ATPE"/>
    <property type="match status" value="1"/>
</dbReference>
<dbReference type="FunFam" id="1.20.20.10:FF:000002">
    <property type="entry name" value="ATP synthase subunit c"/>
    <property type="match status" value="1"/>
</dbReference>
<dbReference type="Gene3D" id="1.20.20.10">
    <property type="entry name" value="F1F0 ATP synthase subunit C"/>
    <property type="match status" value="1"/>
</dbReference>
<dbReference type="HAMAP" id="MF_01396">
    <property type="entry name" value="ATP_synth_c_bact"/>
    <property type="match status" value="1"/>
</dbReference>
<dbReference type="InterPro" id="IPR005953">
    <property type="entry name" value="ATP_synth_csu_bac/chlpt"/>
</dbReference>
<dbReference type="InterPro" id="IPR000454">
    <property type="entry name" value="ATP_synth_F0_csu"/>
</dbReference>
<dbReference type="InterPro" id="IPR020537">
    <property type="entry name" value="ATP_synth_F0_csu_DDCD_BS"/>
</dbReference>
<dbReference type="InterPro" id="IPR038662">
    <property type="entry name" value="ATP_synth_F0_csu_sf"/>
</dbReference>
<dbReference type="InterPro" id="IPR002379">
    <property type="entry name" value="ATPase_proteolipid_c-like_dom"/>
</dbReference>
<dbReference type="InterPro" id="IPR035921">
    <property type="entry name" value="F/V-ATP_Csub_sf"/>
</dbReference>
<dbReference type="NCBIfam" id="TIGR01260">
    <property type="entry name" value="ATP_synt_c"/>
    <property type="match status" value="1"/>
</dbReference>
<dbReference type="NCBIfam" id="NF005363">
    <property type="entry name" value="PRK06876.1"/>
    <property type="match status" value="1"/>
</dbReference>
<dbReference type="Pfam" id="PF00137">
    <property type="entry name" value="ATP-synt_C"/>
    <property type="match status" value="1"/>
</dbReference>
<dbReference type="SUPFAM" id="SSF81333">
    <property type="entry name" value="F1F0 ATP synthase subunit C"/>
    <property type="match status" value="1"/>
</dbReference>
<dbReference type="PROSITE" id="PS00605">
    <property type="entry name" value="ATPASE_C"/>
    <property type="match status" value="1"/>
</dbReference>
<name>ATPL_HYDCU</name>